<sequence>MRGILGLVFGSVILIYLISLFLMKHPFFQIREIKVSGLYVEEIEKIEKDIHALGRGLLVIPESNILELFNEKLNNRFQGVEINKRFSTEGITIEMNFQRRKAISFVNINEKKFLMDMEGIFFWDEYQKPDKTLFIYSKEVFQFFKQKILKLLTQGNSVKVYKDKVMVDIGGKRFILPPLEDINEKEIHLMKKLLKLHPDAKIFDIRYKGFILLNEG</sequence>
<dbReference type="EMBL" id="AE000657">
    <property type="protein sequence ID" value="AAC06775.1"/>
    <property type="molecule type" value="Genomic_DNA"/>
</dbReference>
<dbReference type="PIR" id="C70347">
    <property type="entry name" value="C70347"/>
</dbReference>
<dbReference type="RefSeq" id="NP_213367.1">
    <property type="nucleotide sequence ID" value="NC_000918.1"/>
</dbReference>
<dbReference type="STRING" id="224324.aq_522"/>
<dbReference type="EnsemblBacteria" id="AAC06775">
    <property type="protein sequence ID" value="AAC06775"/>
    <property type="gene ID" value="aq_522"/>
</dbReference>
<dbReference type="KEGG" id="aae:aq_522"/>
<dbReference type="HOGENOM" id="CLU_1275526_0_0_0"/>
<dbReference type="InParanoid" id="O66807"/>
<dbReference type="Proteomes" id="UP000000798">
    <property type="component" value="Chromosome"/>
</dbReference>
<dbReference type="GO" id="GO:0016020">
    <property type="term" value="C:membrane"/>
    <property type="evidence" value="ECO:0007669"/>
    <property type="project" value="UniProtKB-SubCell"/>
</dbReference>
<feature type="chain" id="PRO_0000186866" description="Uncharacterized protein aq_522">
    <location>
        <begin position="1"/>
        <end position="216"/>
    </location>
</feature>
<feature type="transmembrane region" description="Helical" evidence="1">
    <location>
        <begin position="5"/>
        <end position="22"/>
    </location>
</feature>
<proteinExistence type="predicted"/>
<gene>
    <name type="ordered locus">aq_522</name>
</gene>
<protein>
    <recommendedName>
        <fullName>Uncharacterized protein aq_522</fullName>
    </recommendedName>
</protein>
<keyword id="KW-0472">Membrane</keyword>
<keyword id="KW-1185">Reference proteome</keyword>
<keyword id="KW-0812">Transmembrane</keyword>
<keyword id="KW-1133">Transmembrane helix</keyword>
<reference key="1">
    <citation type="journal article" date="1998" name="Nature">
        <title>The complete genome of the hyperthermophilic bacterium Aquifex aeolicus.</title>
        <authorList>
            <person name="Deckert G."/>
            <person name="Warren P.V."/>
            <person name="Gaasterland T."/>
            <person name="Young W.G."/>
            <person name="Lenox A.L."/>
            <person name="Graham D.E."/>
            <person name="Overbeek R."/>
            <person name="Snead M.A."/>
            <person name="Keller M."/>
            <person name="Aujay M."/>
            <person name="Huber R."/>
            <person name="Feldman R.A."/>
            <person name="Short J.M."/>
            <person name="Olsen G.J."/>
            <person name="Swanson R.V."/>
        </authorList>
    </citation>
    <scope>NUCLEOTIDE SEQUENCE [LARGE SCALE GENOMIC DNA]</scope>
    <source>
        <strain>VF5</strain>
    </source>
</reference>
<organism>
    <name type="scientific">Aquifex aeolicus (strain VF5)</name>
    <dbReference type="NCBI Taxonomy" id="224324"/>
    <lineage>
        <taxon>Bacteria</taxon>
        <taxon>Pseudomonadati</taxon>
        <taxon>Aquificota</taxon>
        <taxon>Aquificia</taxon>
        <taxon>Aquificales</taxon>
        <taxon>Aquificaceae</taxon>
        <taxon>Aquifex</taxon>
    </lineage>
</organism>
<name>Y522_AQUAE</name>
<accession>O66807</accession>
<evidence type="ECO:0000255" key="1"/>
<evidence type="ECO:0000305" key="2"/>
<comment type="subcellular location">
    <subcellularLocation>
        <location evidence="2">Membrane</location>
        <topology evidence="2">Single-pass membrane protein</topology>
    </subcellularLocation>
</comment>